<keyword id="KW-0963">Cytoplasm</keyword>
<keyword id="KW-0441">Lipid A biosynthesis</keyword>
<keyword id="KW-0444">Lipid biosynthesis</keyword>
<keyword id="KW-0443">Lipid metabolism</keyword>
<keyword id="KW-0456">Lyase</keyword>
<keyword id="KW-1185">Reference proteome</keyword>
<comment type="function">
    <text evidence="1">Involved in unsaturated fatty acids biosynthesis. Catalyzes the dehydration of short chain beta-hydroxyacyl-ACPs and long chain saturated and unsaturated beta-hydroxyacyl-ACPs.</text>
</comment>
<comment type="catalytic activity">
    <reaction evidence="1">
        <text>a (3R)-hydroxyacyl-[ACP] = a (2E)-enoyl-[ACP] + H2O</text>
        <dbReference type="Rhea" id="RHEA:13097"/>
        <dbReference type="Rhea" id="RHEA-COMP:9925"/>
        <dbReference type="Rhea" id="RHEA-COMP:9945"/>
        <dbReference type="ChEBI" id="CHEBI:15377"/>
        <dbReference type="ChEBI" id="CHEBI:78784"/>
        <dbReference type="ChEBI" id="CHEBI:78827"/>
        <dbReference type="EC" id="4.2.1.59"/>
    </reaction>
</comment>
<comment type="subcellular location">
    <subcellularLocation>
        <location evidence="1">Cytoplasm</location>
    </subcellularLocation>
</comment>
<comment type="similarity">
    <text evidence="1">Belongs to the thioester dehydratase family. FabZ subfamily.</text>
</comment>
<proteinExistence type="inferred from homology"/>
<evidence type="ECO:0000255" key="1">
    <source>
        <dbReference type="HAMAP-Rule" id="MF_00406"/>
    </source>
</evidence>
<organism>
    <name type="scientific">Francisella tularensis subsp. holarctica (strain LVS)</name>
    <dbReference type="NCBI Taxonomy" id="376619"/>
    <lineage>
        <taxon>Bacteria</taxon>
        <taxon>Pseudomonadati</taxon>
        <taxon>Pseudomonadota</taxon>
        <taxon>Gammaproteobacteria</taxon>
        <taxon>Thiotrichales</taxon>
        <taxon>Francisellaceae</taxon>
        <taxon>Francisella</taxon>
    </lineage>
</organism>
<sequence length="163" mass="18150">MSQFNQNNKQIDVMGIRKILPHRYPFALLDKIVDWSVEDRTIVAQKNVTINEDFFNGHFPDFPVMPGVLIVEAMAQATAILGELMAETLFAHVVEKAGGGRRTFMLAGIDKVRVKRPVVPGDVLVIESRMVKQKNIICTAESVAKVDGQIVCSAELMAAYKDY</sequence>
<protein>
    <recommendedName>
        <fullName evidence="1">3-hydroxyacyl-[acyl-carrier-protein] dehydratase FabZ</fullName>
        <ecNumber evidence="1">4.2.1.59</ecNumber>
    </recommendedName>
    <alternativeName>
        <fullName evidence="1">(3R)-hydroxymyristoyl-[acyl-carrier-protein] dehydratase</fullName>
        <shortName evidence="1">(3R)-hydroxymyristoyl-ACP dehydrase</shortName>
    </alternativeName>
    <alternativeName>
        <fullName evidence="1">Beta-hydroxyacyl-ACP dehydratase</fullName>
    </alternativeName>
</protein>
<reference key="1">
    <citation type="submission" date="2006-03" db="EMBL/GenBank/DDBJ databases">
        <title>Complete genome sequence of Francisella tularensis LVS (Live Vaccine Strain).</title>
        <authorList>
            <person name="Chain P."/>
            <person name="Larimer F."/>
            <person name="Land M."/>
            <person name="Stilwagen S."/>
            <person name="Larsson P."/>
            <person name="Bearden S."/>
            <person name="Chu M."/>
            <person name="Oyston P."/>
            <person name="Forsman M."/>
            <person name="Andersson S."/>
            <person name="Lindler L."/>
            <person name="Titball R."/>
            <person name="Garcia E."/>
        </authorList>
    </citation>
    <scope>NUCLEOTIDE SEQUENCE [LARGE SCALE GENOMIC DNA]</scope>
    <source>
        <strain>LVS</strain>
    </source>
</reference>
<gene>
    <name evidence="1" type="primary">fabZ</name>
    <name type="ordered locus">FTL_0538</name>
</gene>
<accession>Q2A4P5</accession>
<name>FABZ_FRATH</name>
<feature type="chain" id="PRO_0000242890" description="3-hydroxyacyl-[acyl-carrier-protein] dehydratase FabZ">
    <location>
        <begin position="1"/>
        <end position="163"/>
    </location>
</feature>
<feature type="active site" evidence="1">
    <location>
        <position position="58"/>
    </location>
</feature>
<dbReference type="EC" id="4.2.1.59" evidence="1"/>
<dbReference type="EMBL" id="AM233362">
    <property type="protein sequence ID" value="CAJ78978.1"/>
    <property type="molecule type" value="Genomic_DNA"/>
</dbReference>
<dbReference type="RefSeq" id="WP_003014877.1">
    <property type="nucleotide sequence ID" value="NZ_CP009694.1"/>
</dbReference>
<dbReference type="SMR" id="Q2A4P5"/>
<dbReference type="GeneID" id="75264783"/>
<dbReference type="KEGG" id="ftl:FTL_0538"/>
<dbReference type="Proteomes" id="UP000001944">
    <property type="component" value="Chromosome"/>
</dbReference>
<dbReference type="GO" id="GO:0005737">
    <property type="term" value="C:cytoplasm"/>
    <property type="evidence" value="ECO:0007669"/>
    <property type="project" value="UniProtKB-SubCell"/>
</dbReference>
<dbReference type="GO" id="GO:0016020">
    <property type="term" value="C:membrane"/>
    <property type="evidence" value="ECO:0007669"/>
    <property type="project" value="GOC"/>
</dbReference>
<dbReference type="GO" id="GO:0019171">
    <property type="term" value="F:(3R)-hydroxyacyl-[acyl-carrier-protein] dehydratase activity"/>
    <property type="evidence" value="ECO:0007669"/>
    <property type="project" value="UniProtKB-EC"/>
</dbReference>
<dbReference type="GO" id="GO:0006633">
    <property type="term" value="P:fatty acid biosynthetic process"/>
    <property type="evidence" value="ECO:0007669"/>
    <property type="project" value="UniProtKB-UniRule"/>
</dbReference>
<dbReference type="GO" id="GO:0009245">
    <property type="term" value="P:lipid A biosynthetic process"/>
    <property type="evidence" value="ECO:0007669"/>
    <property type="project" value="UniProtKB-UniRule"/>
</dbReference>
<dbReference type="CDD" id="cd01288">
    <property type="entry name" value="FabZ"/>
    <property type="match status" value="1"/>
</dbReference>
<dbReference type="FunFam" id="3.10.129.10:FF:000001">
    <property type="entry name" value="3-hydroxyacyl-[acyl-carrier-protein] dehydratase FabZ"/>
    <property type="match status" value="1"/>
</dbReference>
<dbReference type="Gene3D" id="3.10.129.10">
    <property type="entry name" value="Hotdog Thioesterase"/>
    <property type="match status" value="1"/>
</dbReference>
<dbReference type="HAMAP" id="MF_00406">
    <property type="entry name" value="FabZ"/>
    <property type="match status" value="1"/>
</dbReference>
<dbReference type="InterPro" id="IPR013114">
    <property type="entry name" value="FabA_FabZ"/>
</dbReference>
<dbReference type="InterPro" id="IPR010084">
    <property type="entry name" value="FabZ"/>
</dbReference>
<dbReference type="InterPro" id="IPR029069">
    <property type="entry name" value="HotDog_dom_sf"/>
</dbReference>
<dbReference type="NCBIfam" id="TIGR01750">
    <property type="entry name" value="fabZ"/>
    <property type="match status" value="1"/>
</dbReference>
<dbReference type="NCBIfam" id="NF000582">
    <property type="entry name" value="PRK00006.1"/>
    <property type="match status" value="1"/>
</dbReference>
<dbReference type="PANTHER" id="PTHR30272">
    <property type="entry name" value="3-HYDROXYACYL-[ACYL-CARRIER-PROTEIN] DEHYDRATASE"/>
    <property type="match status" value="1"/>
</dbReference>
<dbReference type="PANTHER" id="PTHR30272:SF1">
    <property type="entry name" value="3-HYDROXYACYL-[ACYL-CARRIER-PROTEIN] DEHYDRATASE"/>
    <property type="match status" value="1"/>
</dbReference>
<dbReference type="Pfam" id="PF07977">
    <property type="entry name" value="FabA"/>
    <property type="match status" value="1"/>
</dbReference>
<dbReference type="SUPFAM" id="SSF54637">
    <property type="entry name" value="Thioesterase/thiol ester dehydrase-isomerase"/>
    <property type="match status" value="1"/>
</dbReference>